<sequence length="334" mass="36863">MSGFYHKHFLKLLDFTPAELNSLLQLAAKLKADKKSGKEEAKLTGKNIALIFEKDSTRTRCSFEVAAYDQGARVTYLGPSGSQIGHKESIKDTARVLGRMYDGIQYRGYGQEIVETLAEYAGVPVWNGLTNEFHPTQLLADLLTMQEHLPGKAFNEMTLVYAGDARNNMGNSMLEAAALTGLDLRLVAPQACWPEAALVTECRALAQQNGGNITLTEDVAKGVEGADFIYTDVWVSMGEAKEKWAERIALLRDYQVNSKMMQLTGNPEVKFLHCLPAFHDDQTTLGKKMAEEFGLHGGMEVTDEVFESAASIVFDQAENRMHTIKAVMVATLSK</sequence>
<gene>
    <name evidence="2" type="primary">argI</name>
    <name type="ordered locus">ECIAI1_4485</name>
</gene>
<evidence type="ECO:0000250" key="1"/>
<evidence type="ECO:0000255" key="2">
    <source>
        <dbReference type="HAMAP-Rule" id="MF_01109"/>
    </source>
</evidence>
<comment type="function">
    <text evidence="1">Reversibly catalyzes the transfer of the carbamoyl group from carbamoyl phosphate (CP) to the N(epsilon) atom of ornithine (ORN) to produce L-citrulline.</text>
</comment>
<comment type="catalytic activity">
    <reaction evidence="2">
        <text>carbamoyl phosphate + L-ornithine = L-citrulline + phosphate + H(+)</text>
        <dbReference type="Rhea" id="RHEA:19513"/>
        <dbReference type="ChEBI" id="CHEBI:15378"/>
        <dbReference type="ChEBI" id="CHEBI:43474"/>
        <dbReference type="ChEBI" id="CHEBI:46911"/>
        <dbReference type="ChEBI" id="CHEBI:57743"/>
        <dbReference type="ChEBI" id="CHEBI:58228"/>
        <dbReference type="EC" id="2.1.3.3"/>
    </reaction>
</comment>
<comment type="pathway">
    <text evidence="2">Amino-acid biosynthesis; L-arginine biosynthesis; L-arginine from L-ornithine and carbamoyl phosphate: step 1/3.</text>
</comment>
<comment type="subcellular location">
    <subcellularLocation>
        <location evidence="2">Cytoplasm</location>
    </subcellularLocation>
</comment>
<comment type="similarity">
    <text evidence="2">Belongs to the aspartate/ornithine carbamoyltransferase superfamily. OTCase family.</text>
</comment>
<dbReference type="EC" id="2.1.3.3" evidence="2"/>
<dbReference type="EMBL" id="CU928160">
    <property type="protein sequence ID" value="CAR01227.1"/>
    <property type="molecule type" value="Genomic_DNA"/>
</dbReference>
<dbReference type="SMR" id="B7M9L3"/>
<dbReference type="KEGG" id="ecr:ECIAI1_4485"/>
<dbReference type="HOGENOM" id="CLU_043846_3_1_6"/>
<dbReference type="UniPathway" id="UPA00068">
    <property type="reaction ID" value="UER00112"/>
</dbReference>
<dbReference type="GO" id="GO:0005737">
    <property type="term" value="C:cytoplasm"/>
    <property type="evidence" value="ECO:0007669"/>
    <property type="project" value="UniProtKB-SubCell"/>
</dbReference>
<dbReference type="GO" id="GO:0016597">
    <property type="term" value="F:amino acid binding"/>
    <property type="evidence" value="ECO:0007669"/>
    <property type="project" value="InterPro"/>
</dbReference>
<dbReference type="GO" id="GO:0004585">
    <property type="term" value="F:ornithine carbamoyltransferase activity"/>
    <property type="evidence" value="ECO:0007669"/>
    <property type="project" value="UniProtKB-UniRule"/>
</dbReference>
<dbReference type="GO" id="GO:0042450">
    <property type="term" value="P:arginine biosynthetic process via ornithine"/>
    <property type="evidence" value="ECO:0007669"/>
    <property type="project" value="TreeGrafter"/>
</dbReference>
<dbReference type="GO" id="GO:0019240">
    <property type="term" value="P:citrulline biosynthetic process"/>
    <property type="evidence" value="ECO:0007669"/>
    <property type="project" value="TreeGrafter"/>
</dbReference>
<dbReference type="GO" id="GO:0006526">
    <property type="term" value="P:L-arginine biosynthetic process"/>
    <property type="evidence" value="ECO:0007669"/>
    <property type="project" value="UniProtKB-UniRule"/>
</dbReference>
<dbReference type="FunFam" id="3.40.50.1370:FF:000003">
    <property type="entry name" value="Ornithine carbamoyltransferase"/>
    <property type="match status" value="1"/>
</dbReference>
<dbReference type="FunFam" id="3.40.50.1370:FF:000004">
    <property type="entry name" value="Ornithine carbamoyltransferase"/>
    <property type="match status" value="1"/>
</dbReference>
<dbReference type="Gene3D" id="3.40.50.1370">
    <property type="entry name" value="Aspartate/ornithine carbamoyltransferase"/>
    <property type="match status" value="2"/>
</dbReference>
<dbReference type="HAMAP" id="MF_01109">
    <property type="entry name" value="OTCase"/>
    <property type="match status" value="1"/>
</dbReference>
<dbReference type="InterPro" id="IPR006132">
    <property type="entry name" value="Asp/Orn_carbamoyltranf_P-bd"/>
</dbReference>
<dbReference type="InterPro" id="IPR006130">
    <property type="entry name" value="Asp/Orn_carbamoylTrfase"/>
</dbReference>
<dbReference type="InterPro" id="IPR036901">
    <property type="entry name" value="Asp/Orn_carbamoylTrfase_sf"/>
</dbReference>
<dbReference type="InterPro" id="IPR006131">
    <property type="entry name" value="Asp_carbamoyltransf_Asp/Orn-bd"/>
</dbReference>
<dbReference type="InterPro" id="IPR002292">
    <property type="entry name" value="Orn/put_carbamltrans"/>
</dbReference>
<dbReference type="InterPro" id="IPR024904">
    <property type="entry name" value="OTCase_ArgI"/>
</dbReference>
<dbReference type="NCBIfam" id="TIGR00658">
    <property type="entry name" value="orni_carb_tr"/>
    <property type="match status" value="1"/>
</dbReference>
<dbReference type="NCBIfam" id="NF003286">
    <property type="entry name" value="PRK04284.1"/>
    <property type="match status" value="1"/>
</dbReference>
<dbReference type="NCBIfam" id="NF009213">
    <property type="entry name" value="PRK12562.1"/>
    <property type="match status" value="1"/>
</dbReference>
<dbReference type="PANTHER" id="PTHR45753:SF4">
    <property type="entry name" value="ORNITHINE CARBAMOYLTRANSFERASE SUBUNIT F-RELATED"/>
    <property type="match status" value="1"/>
</dbReference>
<dbReference type="PANTHER" id="PTHR45753">
    <property type="entry name" value="ORNITHINE CARBAMOYLTRANSFERASE, MITOCHONDRIAL"/>
    <property type="match status" value="1"/>
</dbReference>
<dbReference type="Pfam" id="PF00185">
    <property type="entry name" value="OTCace"/>
    <property type="match status" value="1"/>
</dbReference>
<dbReference type="Pfam" id="PF02729">
    <property type="entry name" value="OTCace_N"/>
    <property type="match status" value="1"/>
</dbReference>
<dbReference type="PRINTS" id="PR00100">
    <property type="entry name" value="AOTCASE"/>
</dbReference>
<dbReference type="PRINTS" id="PR00102">
    <property type="entry name" value="OTCASE"/>
</dbReference>
<dbReference type="SUPFAM" id="SSF53671">
    <property type="entry name" value="Aspartate/ornithine carbamoyltransferase"/>
    <property type="match status" value="1"/>
</dbReference>
<dbReference type="PROSITE" id="PS00097">
    <property type="entry name" value="CARBAMOYLTRANSFERASE"/>
    <property type="match status" value="1"/>
</dbReference>
<reference key="1">
    <citation type="journal article" date="2009" name="PLoS Genet.">
        <title>Organised genome dynamics in the Escherichia coli species results in highly diverse adaptive paths.</title>
        <authorList>
            <person name="Touchon M."/>
            <person name="Hoede C."/>
            <person name="Tenaillon O."/>
            <person name="Barbe V."/>
            <person name="Baeriswyl S."/>
            <person name="Bidet P."/>
            <person name="Bingen E."/>
            <person name="Bonacorsi S."/>
            <person name="Bouchier C."/>
            <person name="Bouvet O."/>
            <person name="Calteau A."/>
            <person name="Chiapello H."/>
            <person name="Clermont O."/>
            <person name="Cruveiller S."/>
            <person name="Danchin A."/>
            <person name="Diard M."/>
            <person name="Dossat C."/>
            <person name="Karoui M.E."/>
            <person name="Frapy E."/>
            <person name="Garry L."/>
            <person name="Ghigo J.M."/>
            <person name="Gilles A.M."/>
            <person name="Johnson J."/>
            <person name="Le Bouguenec C."/>
            <person name="Lescat M."/>
            <person name="Mangenot S."/>
            <person name="Martinez-Jehanne V."/>
            <person name="Matic I."/>
            <person name="Nassif X."/>
            <person name="Oztas S."/>
            <person name="Petit M.A."/>
            <person name="Pichon C."/>
            <person name="Rouy Z."/>
            <person name="Ruf C.S."/>
            <person name="Schneider D."/>
            <person name="Tourret J."/>
            <person name="Vacherie B."/>
            <person name="Vallenet D."/>
            <person name="Medigue C."/>
            <person name="Rocha E.P.C."/>
            <person name="Denamur E."/>
        </authorList>
    </citation>
    <scope>NUCLEOTIDE SEQUENCE [LARGE SCALE GENOMIC DNA]</scope>
    <source>
        <strain>IAI1</strain>
    </source>
</reference>
<accession>B7M9L3</accession>
<keyword id="KW-0028">Amino-acid biosynthesis</keyword>
<keyword id="KW-0055">Arginine biosynthesis</keyword>
<keyword id="KW-0963">Cytoplasm</keyword>
<keyword id="KW-0808">Transferase</keyword>
<protein>
    <recommendedName>
        <fullName evidence="2">Ornithine carbamoyltransferase</fullName>
        <shortName evidence="2">OTCase</shortName>
        <ecNumber evidence="2">2.1.3.3</ecNumber>
    </recommendedName>
</protein>
<proteinExistence type="inferred from homology"/>
<organism>
    <name type="scientific">Escherichia coli O8 (strain IAI1)</name>
    <dbReference type="NCBI Taxonomy" id="585034"/>
    <lineage>
        <taxon>Bacteria</taxon>
        <taxon>Pseudomonadati</taxon>
        <taxon>Pseudomonadota</taxon>
        <taxon>Gammaproteobacteria</taxon>
        <taxon>Enterobacterales</taxon>
        <taxon>Enterobacteriaceae</taxon>
        <taxon>Escherichia</taxon>
    </lineage>
</organism>
<feature type="chain" id="PRO_1000163969" description="Ornithine carbamoyltransferase">
    <location>
        <begin position="1"/>
        <end position="334"/>
    </location>
</feature>
<feature type="binding site" evidence="2">
    <location>
        <begin position="56"/>
        <end position="59"/>
    </location>
    <ligand>
        <name>carbamoyl phosphate</name>
        <dbReference type="ChEBI" id="CHEBI:58228"/>
    </ligand>
</feature>
<feature type="binding site" evidence="2">
    <location>
        <position position="83"/>
    </location>
    <ligand>
        <name>carbamoyl phosphate</name>
        <dbReference type="ChEBI" id="CHEBI:58228"/>
    </ligand>
</feature>
<feature type="binding site" evidence="2">
    <location>
        <position position="107"/>
    </location>
    <ligand>
        <name>carbamoyl phosphate</name>
        <dbReference type="ChEBI" id="CHEBI:58228"/>
    </ligand>
</feature>
<feature type="binding site" evidence="2">
    <location>
        <begin position="134"/>
        <end position="137"/>
    </location>
    <ligand>
        <name>carbamoyl phosphate</name>
        <dbReference type="ChEBI" id="CHEBI:58228"/>
    </ligand>
</feature>
<feature type="binding site" evidence="2">
    <location>
        <position position="168"/>
    </location>
    <ligand>
        <name>L-ornithine</name>
        <dbReference type="ChEBI" id="CHEBI:46911"/>
    </ligand>
</feature>
<feature type="binding site" evidence="2">
    <location>
        <position position="232"/>
    </location>
    <ligand>
        <name>L-ornithine</name>
        <dbReference type="ChEBI" id="CHEBI:46911"/>
    </ligand>
</feature>
<feature type="binding site" evidence="2">
    <location>
        <begin position="236"/>
        <end position="237"/>
    </location>
    <ligand>
        <name>L-ornithine</name>
        <dbReference type="ChEBI" id="CHEBI:46911"/>
    </ligand>
</feature>
<feature type="binding site" evidence="2">
    <location>
        <begin position="274"/>
        <end position="275"/>
    </location>
    <ligand>
        <name>carbamoyl phosphate</name>
        <dbReference type="ChEBI" id="CHEBI:58228"/>
    </ligand>
</feature>
<feature type="binding site" evidence="2">
    <location>
        <position position="320"/>
    </location>
    <ligand>
        <name>carbamoyl phosphate</name>
        <dbReference type="ChEBI" id="CHEBI:58228"/>
    </ligand>
</feature>
<name>OTC_ECO8A</name>